<comment type="function">
    <text evidence="10 12 13">Receptor tyrosine kinase involved in the development and the maturation of the central and peripheral nervous systems through regulation of proliferation, differentiation and survival of sympathetic and nervous neurons. High affinity receptor for NGF which is its primary ligand, it can also bind and be activated by NTF3/neurotrophin-3. However, NTF3 only supports axonal extension through NTRK1 but has no effect on neuron survival. Upon dimeric NGF ligand-binding, undergoes homodimerization, autophosphorylation and activation. Recruits, phosphorylates and/or activates several downstream effectors including SHC1, FRS2, SH2B1, SH2B2 and PLCG1 that regulate distinct overlapping signaling cascades driving cell survival and differentiation. Through SHC1 and FRS2 activates a GRB2-Ras-MAPK cascade that regulates cell differentiation and survival. Through PLCG1 controls NF-Kappa-B activation and the transcription of genes involved in cell survival. Through SHC1 and SH2B1 controls a Ras-PI3 kinase-AKT1 signaling cascade that is also regulating survival. In absence of ligand and activation, may promote cell death, making the survival of neurons dependent on trophic factors.</text>
</comment>
<comment type="catalytic activity">
    <reaction evidence="7">
        <text>L-tyrosyl-[protein] + ATP = O-phospho-L-tyrosyl-[protein] + ADP + H(+)</text>
        <dbReference type="Rhea" id="RHEA:10596"/>
        <dbReference type="Rhea" id="RHEA-COMP:10136"/>
        <dbReference type="Rhea" id="RHEA-COMP:20101"/>
        <dbReference type="ChEBI" id="CHEBI:15378"/>
        <dbReference type="ChEBI" id="CHEBI:30616"/>
        <dbReference type="ChEBI" id="CHEBI:46858"/>
        <dbReference type="ChEBI" id="CHEBI:61978"/>
        <dbReference type="ChEBI" id="CHEBI:456216"/>
        <dbReference type="EC" id="2.7.10.1"/>
    </reaction>
</comment>
<comment type="activity regulation">
    <text evidence="8 9 10">The pro-survival signaling effect of NTRK1 in neurons requires its endocytosis into signaling early endosomes and its retrograde axonal transport. This is regulated by different proteins including CFL1, RAC1 and SORT1. NTF3 is unable to induce this signaling probably due to the lability of the NTF3-NTRK1 complex in endosomes. SH2D1A inhibits the autophosphorylation of the receptor, and alters the recruitment and activation of downstream effectors and signaling cascades. Regulated by NGFR.</text>
</comment>
<comment type="subunit">
    <text evidence="2 3 9">Exists in a dynamic equilibrium between monomeric (low affinity) and dimeric (high affinity) structures. Homodimerization is induced by binding of a NGF dimer (By similarity). Found in a complex, at least composed of KIDINS220, MAGI2, NTRK1 and RAPGEF2; the complex is mainly formed at late endosomes in a nerve growth factor (NGF)-dependent manner. Interacts with RAPGEF2; the interaction is strengthened after NGF stimulation. Interacts with SQSTM1; bridges NTRK1 to NGFR. Forms a ternary complex with NGFR and KIDINS220; this complex is affected by the expression levels of KIDINS220 and an increase in KIDINS220 expression leads to a decreased association of NGFR and NTRK1. Interacts (phosphorylated upon activation by NGF) with SHC1; mediates SHC1 phosphorylation and activation. Interacts (phosphorylated upon activation by NGF) with PLCG1; mediates PLCG1 phosphorylation and activation. Interacts (phosphorylated) with SH2B1 and SH2B2. Interacts with GRB2. Interacts with PIK3R1. Interacts with FRS2. Interacts with SORT1; may regulate NTRK1 anterograde axonal transport (By similarity). Interacts with SH2D1A; regulates NTRK1 (PubMed:16223723). Interacts with NRADD. Interacts with RAB7A. Interacts with PTPRS (By similarity). Interacts with USP36; USP36 does not deubiquitinate NTRK1 (By similarity). Interacts with GGA3 (By similarity). Interacts with TSPAN1; this interaction promotes NTRK1 stability (By similarity).</text>
</comment>
<comment type="subcellular location">
    <subcellularLocation>
        <location evidence="3">Cell membrane</location>
        <topology evidence="3">Single-pass type I membrane protein</topology>
    </subcellularLocation>
    <subcellularLocation>
        <location evidence="10">Early endosome membrane</location>
        <topology evidence="10">Single-pass type I membrane protein</topology>
    </subcellularLocation>
    <subcellularLocation>
        <location evidence="3">Late endosome membrane</location>
        <topology evidence="3">Single-pass type I membrane protein</topology>
    </subcellularLocation>
    <subcellularLocation>
        <location evidence="3">Recycling endosome membrane</location>
        <topology evidence="3">Single-pass type I membrane protein</topology>
    </subcellularLocation>
    <text evidence="3">Internalized to endosomes upon binding of NGF or NTF3 and further transported to the cell body via a retrograde axonal transport. Localized at cell membrane and early endosomes before nerve growth factor (NGF) stimulation. Recruited to late endosomes after NGF stimulation. Colocalized with RAPGEF2 at late endosomes.</text>
</comment>
<comment type="developmental stage">
    <text evidence="13">First detected at 13.5 dpc, a time coinciding with the requirement of sympathetic neurons for NGF.</text>
</comment>
<comment type="induction">
    <text evidence="11">Expression oscillates in a circadian manner in the suprachiasmatic nucleus (SCN) of the brain.</text>
</comment>
<comment type="domain">
    <text evidence="3">The transmembrane domain mediates interaction with KIDINS220.</text>
</comment>
<comment type="domain">
    <text evidence="3">The extracellular domain mediates interaction with NGFR.</text>
</comment>
<comment type="PTM">
    <text>Ligand-mediated autophosphorylation. Interaction with SQSTM1 is phosphotyrosine-dependent. Autophosphorylation at Tyr-499 mediates interaction and phosphorylation of SHC1.</text>
</comment>
<comment type="PTM">
    <text evidence="2">N-glycosylated.</text>
</comment>
<comment type="PTM">
    <text evidence="2 8">Ubiquitinated (PubMed:16113645). Undergoes polyubiquitination upon activation; regulated by NGFR. Ubiquitination by NEDD4L leads to degradation (By similarity). Ubiquitination regulates the internalization of the receptor (PubMed:16113645).</text>
</comment>
<comment type="disruption phenotype">
    <text evidence="12">Mice die early after birth due to severe sensory and sympathetic neuropathies characterized by extensive neuronal cell loss in trigeminal, sympathetic and dorsal root ganglia, as well as a decrease in the cholinergic basal forebrain projections to the hippocampus and cortex. There are for instance 35% fewer cells by 17.5 dpc in the superior cervical ganglion, a major component of the sympathetic system.</text>
</comment>
<comment type="similarity">
    <text evidence="6">Belongs to the protein kinase superfamily. Tyr protein kinase family. Insulin receptor subfamily.</text>
</comment>
<comment type="sequence caution" evidence="14">
    <conflict type="erroneous initiation">
        <sequence resource="EMBL-CDS" id="BAE28644"/>
    </conflict>
    <text>Truncated N-terminus.</text>
</comment>
<accession>Q3UFB7</accession>
<organism>
    <name type="scientific">Mus musculus</name>
    <name type="common">Mouse</name>
    <dbReference type="NCBI Taxonomy" id="10090"/>
    <lineage>
        <taxon>Eukaryota</taxon>
        <taxon>Metazoa</taxon>
        <taxon>Chordata</taxon>
        <taxon>Craniata</taxon>
        <taxon>Vertebrata</taxon>
        <taxon>Euteleostomi</taxon>
        <taxon>Mammalia</taxon>
        <taxon>Eutheria</taxon>
        <taxon>Euarchontoglires</taxon>
        <taxon>Glires</taxon>
        <taxon>Rodentia</taxon>
        <taxon>Myomorpha</taxon>
        <taxon>Muroidea</taxon>
        <taxon>Muridae</taxon>
        <taxon>Murinae</taxon>
        <taxon>Mus</taxon>
        <taxon>Mus</taxon>
    </lineage>
</organism>
<sequence length="799" mass="87738">MLRGQRLGQLGWHRPAAGLGSLMTSLMLACASAASCREVCCPVGPSGLRCTRAGSLDTLRGLRGAGNLTELYVENQQHLQRLEFEDLQGLGELRSLTIVKSGLRFVAPDAFRFTPRLSHLNLSSNALESLSWKTVQGLSLQDLTLSGNPLHCSCALFWLQRWEQEGLCGVHTQTLHDSGPGDQFLPLGHNTSCGVPTVKIQMPNDSVEVGDDVFLQCQVEGLALQQADWILTELEGAATVKKFGDLPSLGLILVNVTSDLNKKNVTCWAENDVGRAEVSVQVSVSFPASVHLGLAVEQHHWCIPFSVDGQPAPSLRWLFNGSVLNETSFIFTQFLESALTNETMRHGCLRLNQPTHVNNGNYTLLAANPYGQAAASVMAAFMDNPFEFNPEDPIPVSFSPVDGNSTSRDPVEKKDETPFGVSVAVGLAVSAALFLSALLLVLNKCGQRSKFGINRPAVLAPEDGLAMSLHFMTLGGSSLSPTEGKGSGLQGHIMENPQYFSDTCVHHIKRQDIILKWELGEGAFGKVFLAECYNLLNDQDKMLVAVKALKEASENARQDFQREAELLTMLQHQHIVRFFGVCTEGGPLLMVFEYMRHGDLNRFLRSHGPDAKLLAGGEDVAPGPLGLGQLLAVASQVAAGMVYLASLHFVHRDLATRNCLVGQGLVVKIGDFGMSRDIYSTDYYRVGGRTMLPIRWMPPESILYRKFSTESDVWSFGVVLWEIFTYGKQPWYQLSNTEAIECITQGRELERPRACPPDVYAIMRGCWQREPQQRLSMKDVHARLQALAQAPPSYLDVLG</sequence>
<reference key="1">
    <citation type="journal article" date="2005" name="Science">
        <title>The transcriptional landscape of the mammalian genome.</title>
        <authorList>
            <person name="Carninci P."/>
            <person name="Kasukawa T."/>
            <person name="Katayama S."/>
            <person name="Gough J."/>
            <person name="Frith M.C."/>
            <person name="Maeda N."/>
            <person name="Oyama R."/>
            <person name="Ravasi T."/>
            <person name="Lenhard B."/>
            <person name="Wells C."/>
            <person name="Kodzius R."/>
            <person name="Shimokawa K."/>
            <person name="Bajic V.B."/>
            <person name="Brenner S.E."/>
            <person name="Batalov S."/>
            <person name="Forrest A.R."/>
            <person name="Zavolan M."/>
            <person name="Davis M.J."/>
            <person name="Wilming L.G."/>
            <person name="Aidinis V."/>
            <person name="Allen J.E."/>
            <person name="Ambesi-Impiombato A."/>
            <person name="Apweiler R."/>
            <person name="Aturaliya R.N."/>
            <person name="Bailey T.L."/>
            <person name="Bansal M."/>
            <person name="Baxter L."/>
            <person name="Beisel K.W."/>
            <person name="Bersano T."/>
            <person name="Bono H."/>
            <person name="Chalk A.M."/>
            <person name="Chiu K.P."/>
            <person name="Choudhary V."/>
            <person name="Christoffels A."/>
            <person name="Clutterbuck D.R."/>
            <person name="Crowe M.L."/>
            <person name="Dalla E."/>
            <person name="Dalrymple B.P."/>
            <person name="de Bono B."/>
            <person name="Della Gatta G."/>
            <person name="di Bernardo D."/>
            <person name="Down T."/>
            <person name="Engstrom P."/>
            <person name="Fagiolini M."/>
            <person name="Faulkner G."/>
            <person name="Fletcher C.F."/>
            <person name="Fukushima T."/>
            <person name="Furuno M."/>
            <person name="Futaki S."/>
            <person name="Gariboldi M."/>
            <person name="Georgii-Hemming P."/>
            <person name="Gingeras T.R."/>
            <person name="Gojobori T."/>
            <person name="Green R.E."/>
            <person name="Gustincich S."/>
            <person name="Harbers M."/>
            <person name="Hayashi Y."/>
            <person name="Hensch T.K."/>
            <person name="Hirokawa N."/>
            <person name="Hill D."/>
            <person name="Huminiecki L."/>
            <person name="Iacono M."/>
            <person name="Ikeo K."/>
            <person name="Iwama A."/>
            <person name="Ishikawa T."/>
            <person name="Jakt M."/>
            <person name="Kanapin A."/>
            <person name="Katoh M."/>
            <person name="Kawasawa Y."/>
            <person name="Kelso J."/>
            <person name="Kitamura H."/>
            <person name="Kitano H."/>
            <person name="Kollias G."/>
            <person name="Krishnan S.P."/>
            <person name="Kruger A."/>
            <person name="Kummerfeld S.K."/>
            <person name="Kurochkin I.V."/>
            <person name="Lareau L.F."/>
            <person name="Lazarevic D."/>
            <person name="Lipovich L."/>
            <person name="Liu J."/>
            <person name="Liuni S."/>
            <person name="McWilliam S."/>
            <person name="Madan Babu M."/>
            <person name="Madera M."/>
            <person name="Marchionni L."/>
            <person name="Matsuda H."/>
            <person name="Matsuzawa S."/>
            <person name="Miki H."/>
            <person name="Mignone F."/>
            <person name="Miyake S."/>
            <person name="Morris K."/>
            <person name="Mottagui-Tabar S."/>
            <person name="Mulder N."/>
            <person name="Nakano N."/>
            <person name="Nakauchi H."/>
            <person name="Ng P."/>
            <person name="Nilsson R."/>
            <person name="Nishiguchi S."/>
            <person name="Nishikawa S."/>
            <person name="Nori F."/>
            <person name="Ohara O."/>
            <person name="Okazaki Y."/>
            <person name="Orlando V."/>
            <person name="Pang K.C."/>
            <person name="Pavan W.J."/>
            <person name="Pavesi G."/>
            <person name="Pesole G."/>
            <person name="Petrovsky N."/>
            <person name="Piazza S."/>
            <person name="Reed J."/>
            <person name="Reid J.F."/>
            <person name="Ring B.Z."/>
            <person name="Ringwald M."/>
            <person name="Rost B."/>
            <person name="Ruan Y."/>
            <person name="Salzberg S.L."/>
            <person name="Sandelin A."/>
            <person name="Schneider C."/>
            <person name="Schoenbach C."/>
            <person name="Sekiguchi K."/>
            <person name="Semple C.A."/>
            <person name="Seno S."/>
            <person name="Sessa L."/>
            <person name="Sheng Y."/>
            <person name="Shibata Y."/>
            <person name="Shimada H."/>
            <person name="Shimada K."/>
            <person name="Silva D."/>
            <person name="Sinclair B."/>
            <person name="Sperling S."/>
            <person name="Stupka E."/>
            <person name="Sugiura K."/>
            <person name="Sultana R."/>
            <person name="Takenaka Y."/>
            <person name="Taki K."/>
            <person name="Tammoja K."/>
            <person name="Tan S.L."/>
            <person name="Tang S."/>
            <person name="Taylor M.S."/>
            <person name="Tegner J."/>
            <person name="Teichmann S.A."/>
            <person name="Ueda H.R."/>
            <person name="van Nimwegen E."/>
            <person name="Verardo R."/>
            <person name="Wei C.L."/>
            <person name="Yagi K."/>
            <person name="Yamanishi H."/>
            <person name="Zabarovsky E."/>
            <person name="Zhu S."/>
            <person name="Zimmer A."/>
            <person name="Hide W."/>
            <person name="Bult C."/>
            <person name="Grimmond S.M."/>
            <person name="Teasdale R.D."/>
            <person name="Liu E.T."/>
            <person name="Brusic V."/>
            <person name="Quackenbush J."/>
            <person name="Wahlestedt C."/>
            <person name="Mattick J.S."/>
            <person name="Hume D.A."/>
            <person name="Kai C."/>
            <person name="Sasaki D."/>
            <person name="Tomaru Y."/>
            <person name="Fukuda S."/>
            <person name="Kanamori-Katayama M."/>
            <person name="Suzuki M."/>
            <person name="Aoki J."/>
            <person name="Arakawa T."/>
            <person name="Iida J."/>
            <person name="Imamura K."/>
            <person name="Itoh M."/>
            <person name="Kato T."/>
            <person name="Kawaji H."/>
            <person name="Kawagashira N."/>
            <person name="Kawashima T."/>
            <person name="Kojima M."/>
            <person name="Kondo S."/>
            <person name="Konno H."/>
            <person name="Nakano K."/>
            <person name="Ninomiya N."/>
            <person name="Nishio T."/>
            <person name="Okada M."/>
            <person name="Plessy C."/>
            <person name="Shibata K."/>
            <person name="Shiraki T."/>
            <person name="Suzuki S."/>
            <person name="Tagami M."/>
            <person name="Waki K."/>
            <person name="Watahiki A."/>
            <person name="Okamura-Oho Y."/>
            <person name="Suzuki H."/>
            <person name="Kawai J."/>
            <person name="Hayashizaki Y."/>
        </authorList>
    </citation>
    <scope>NUCLEOTIDE SEQUENCE [LARGE SCALE MRNA]</scope>
    <source>
        <strain>C57BL/6J</strain>
        <tissue>Embryo</tissue>
        <tissue>Sympathetic ganglion</tissue>
    </source>
</reference>
<reference key="2">
    <citation type="journal article" date="1994" name="Nature">
        <title>Severe sensory and sympathetic neuropathies in mice carrying a disrupted Trk/NGF receptor gene.</title>
        <authorList>
            <person name="Smeyne R.J."/>
            <person name="Klein R."/>
            <person name="Schnapp A."/>
            <person name="Long L.K."/>
            <person name="Bryant S."/>
            <person name="Lewin A."/>
            <person name="Lira S.A."/>
            <person name="Barbacid M."/>
        </authorList>
    </citation>
    <scope>DISRUPTION PHENOTYPE</scope>
    <scope>FUNCTION IN DEVELOPMENT OF THE NERVOUS SYSTEM</scope>
</reference>
<reference key="3">
    <citation type="journal article" date="1996" name="J. Neurosci.">
        <title>TrkA, but not TrkC, receptors are essential for survival of sympathetic neurons in vivo.</title>
        <authorList>
            <person name="Fagan A.M."/>
            <person name="Zhang H."/>
            <person name="Landis S."/>
            <person name="Smeyne R.J."/>
            <person name="Silos-Santiago I."/>
            <person name="Barbacid M."/>
        </authorList>
    </citation>
    <scope>FUNCTION IN SYMPATHETIC NEURONS SURVIVAL</scope>
    <scope>DEVELOPMENTAL STAGE</scope>
</reference>
<reference key="4">
    <citation type="journal article" date="2005" name="EMBO Rep.">
        <title>p75 neurotrophin receptor reduces ligand-induced Trk receptor ubiquitination and delays Trk receptor internalization and degradation.</title>
        <authorList>
            <person name="Makkerh J.P."/>
            <person name="Ceni C."/>
            <person name="Auld D.S."/>
            <person name="Vaillancourt F."/>
            <person name="Dorval G."/>
            <person name="Barker P.A."/>
        </authorList>
    </citation>
    <scope>UBIQUITINATION</scope>
    <scope>ACTIVITY REGULATION</scope>
</reference>
<reference key="5">
    <citation type="journal article" date="2005" name="J. Biol. Chem.">
        <title>SLAM-associated protein as a potential negative regulator in Trk signaling.</title>
        <authorList>
            <person name="Lo K.Y."/>
            <person name="Chin W.H."/>
            <person name="Ng Y.P."/>
            <person name="Cheng A.W."/>
            <person name="Cheung Z.H."/>
            <person name="Ip N.Y."/>
        </authorList>
    </citation>
    <scope>ACTIVITY REGULATION</scope>
    <scope>INTERACTION WITH SH2D1A</scope>
</reference>
<reference key="6">
    <citation type="journal article" date="2011" name="Cell">
        <title>Recruitment of actin modifiers to TrkA endosomes governs retrograde NGF signaling and survival.</title>
        <authorList>
            <person name="Harrington A.W."/>
            <person name="St Hillaire C."/>
            <person name="Zweifel L.S."/>
            <person name="Glebova N.O."/>
            <person name="Philippidou P."/>
            <person name="Halegoua S."/>
            <person name="Ginty D.D."/>
        </authorList>
    </citation>
    <scope>FUNCTION IN NGF AND NTF3 SIGNALING</scope>
    <scope>ACTIVITY REGULATION</scope>
    <scope>SUBCELLULAR LOCATION</scope>
</reference>
<reference key="7">
    <citation type="journal article" date="2013" name="J. Neurosci.">
        <title>p75 neurotrophin receptor is a clock gene that regulates oscillatory components of circadian and metabolic networks.</title>
        <authorList>
            <person name="Baeza-Raja B."/>
            <person name="Eckel-Mahan K."/>
            <person name="Zhang L."/>
            <person name="Vagena E."/>
            <person name="Tsigelny I.F."/>
            <person name="Sassone-Corsi P."/>
            <person name="Ptacek L.J."/>
            <person name="Akassoglou K."/>
        </authorList>
    </citation>
    <scope>INDUCTION</scope>
</reference>
<proteinExistence type="evidence at protein level"/>
<feature type="signal peptide" evidence="4">
    <location>
        <begin position="1"/>
        <end position="33"/>
    </location>
</feature>
<feature type="chain" id="PRO_0000278537" description="High affinity nerve growth factor receptor">
    <location>
        <begin position="34"/>
        <end position="799"/>
    </location>
</feature>
<feature type="topological domain" description="Extracellular" evidence="4">
    <location>
        <begin position="34"/>
        <end position="420"/>
    </location>
</feature>
<feature type="transmembrane region" description="Helical" evidence="4">
    <location>
        <begin position="421"/>
        <end position="441"/>
    </location>
</feature>
<feature type="topological domain" description="Cytoplasmic" evidence="4">
    <location>
        <begin position="442"/>
        <end position="799"/>
    </location>
</feature>
<feature type="repeat" description="LRR 1">
    <location>
        <begin position="90"/>
        <end position="113"/>
    </location>
</feature>
<feature type="repeat" description="LRR 2">
    <location>
        <begin position="116"/>
        <end position="137"/>
    </location>
</feature>
<feature type="domain" description="LRRCT">
    <location>
        <begin position="148"/>
        <end position="219"/>
    </location>
</feature>
<feature type="domain" description="Ig-like C2-type 1">
    <location>
        <begin position="196"/>
        <end position="285"/>
    </location>
</feature>
<feature type="domain" description="Ig-like C2-type 2">
    <location>
        <begin position="205"/>
        <end position="368"/>
    </location>
</feature>
<feature type="domain" description="Protein kinase" evidence="6">
    <location>
        <begin position="513"/>
        <end position="784"/>
    </location>
</feature>
<feature type="region of interest" description="Interaction with SQSTM1" evidence="1">
    <location>
        <begin position="472"/>
        <end position="493"/>
    </location>
</feature>
<feature type="active site" description="Proton acceptor" evidence="6 7">
    <location>
        <position position="653"/>
    </location>
</feature>
<feature type="binding site" evidence="6">
    <location>
        <begin position="519"/>
        <end position="527"/>
    </location>
    <ligand>
        <name>ATP</name>
        <dbReference type="ChEBI" id="CHEBI:30616"/>
    </ligand>
</feature>
<feature type="binding site" evidence="6">
    <location>
        <position position="547"/>
    </location>
    <ligand>
        <name>ATP</name>
        <dbReference type="ChEBI" id="CHEBI:30616"/>
    </ligand>
</feature>
<feature type="site" description="Interaction with SHC1" evidence="1">
    <location>
        <position position="499"/>
    </location>
</feature>
<feature type="site" description="Interaction with PLCG1" evidence="1">
    <location>
        <position position="794"/>
    </location>
</feature>
<feature type="modified residue" description="Phosphotyrosine; by autocatalysis" evidence="2">
    <location>
        <position position="499"/>
    </location>
</feature>
<feature type="modified residue" description="Phosphotyrosine; by autocatalysis" evidence="2">
    <location>
        <position position="679"/>
    </location>
</feature>
<feature type="modified residue" description="Phosphotyrosine; by autocatalysis" evidence="2">
    <location>
        <position position="683"/>
    </location>
</feature>
<feature type="modified residue" description="Phosphotyrosine; by autocatalysis" evidence="2">
    <location>
        <position position="684"/>
    </location>
</feature>
<feature type="modified residue" description="Phosphotyrosine; by autocatalysis" evidence="2">
    <location>
        <position position="794"/>
    </location>
</feature>
<feature type="glycosylation site" description="N-linked (GlcNAc...) asparagine" evidence="4">
    <location>
        <position position="67"/>
    </location>
</feature>
<feature type="glycosylation site" description="N-linked (GlcNAc...) asparagine" evidence="4">
    <location>
        <position position="121"/>
    </location>
</feature>
<feature type="glycosylation site" description="N-linked (GlcNAc...) asparagine" evidence="4">
    <location>
        <position position="190"/>
    </location>
</feature>
<feature type="glycosylation site" description="N-linked (GlcNAc...) asparagine" evidence="4">
    <location>
        <position position="204"/>
    </location>
</feature>
<feature type="glycosylation site" description="N-linked (GlcNAc...) asparagine" evidence="4">
    <location>
        <position position="255"/>
    </location>
</feature>
<feature type="glycosylation site" description="N-linked (GlcNAc...) asparagine" evidence="4">
    <location>
        <position position="264"/>
    </location>
</feature>
<feature type="glycosylation site" description="N-linked (GlcNAc...) asparagine" evidence="4">
    <location>
        <position position="320"/>
    </location>
</feature>
<feature type="glycosylation site" description="N-linked (GlcNAc...) asparagine" evidence="4">
    <location>
        <position position="325"/>
    </location>
</feature>
<feature type="glycosylation site" description="N-linked (GlcNAc...) asparagine" evidence="4">
    <location>
        <position position="341"/>
    </location>
</feature>
<feature type="glycosylation site" description="N-linked (GlcNAc...) asparagine" evidence="4">
    <location>
        <position position="361"/>
    </location>
</feature>
<feature type="glycosylation site" description="N-linked (GlcNAc...) asparagine" evidence="4">
    <location>
        <position position="404"/>
    </location>
</feature>
<feature type="disulfide bond" evidence="2">
    <location>
        <begin position="36"/>
        <end position="41"/>
    </location>
</feature>
<feature type="disulfide bond" evidence="2">
    <location>
        <begin position="40"/>
        <end position="50"/>
    </location>
</feature>
<feature type="disulfide bond" evidence="5">
    <location>
        <begin position="154"/>
        <end position="193"/>
    </location>
</feature>
<feature type="disulfide bond" evidence="5">
    <location>
        <begin position="217"/>
        <end position="267"/>
    </location>
</feature>
<feature type="disulfide bond" evidence="2">
    <location>
        <begin position="302"/>
        <end position="348"/>
    </location>
</feature>
<keyword id="KW-0067">ATP-binding</keyword>
<keyword id="KW-1003">Cell membrane</keyword>
<keyword id="KW-0217">Developmental protein</keyword>
<keyword id="KW-0221">Differentiation</keyword>
<keyword id="KW-1015">Disulfide bond</keyword>
<keyword id="KW-0967">Endosome</keyword>
<keyword id="KW-0325">Glycoprotein</keyword>
<keyword id="KW-0393">Immunoglobulin domain</keyword>
<keyword id="KW-0418">Kinase</keyword>
<keyword id="KW-0433">Leucine-rich repeat</keyword>
<keyword id="KW-0472">Membrane</keyword>
<keyword id="KW-0524">Neurogenesis</keyword>
<keyword id="KW-0547">Nucleotide-binding</keyword>
<keyword id="KW-0597">Phosphoprotein</keyword>
<keyword id="KW-0675">Receptor</keyword>
<keyword id="KW-1185">Reference proteome</keyword>
<keyword id="KW-0677">Repeat</keyword>
<keyword id="KW-0732">Signal</keyword>
<keyword id="KW-0808">Transferase</keyword>
<keyword id="KW-0812">Transmembrane</keyword>
<keyword id="KW-1133">Transmembrane helix</keyword>
<keyword id="KW-0829">Tyrosine-protein kinase</keyword>
<keyword id="KW-0832">Ubl conjugation</keyword>
<protein>
    <recommendedName>
        <fullName>High affinity nerve growth factor receptor</fullName>
        <ecNumber>2.7.10.1</ecNumber>
    </recommendedName>
    <alternativeName>
        <fullName>Neurotrophic tyrosine kinase receptor type 1</fullName>
    </alternativeName>
</protein>
<dbReference type="EC" id="2.7.10.1"/>
<dbReference type="EMBL" id="AK081588">
    <property type="status" value="NOT_ANNOTATED_CDS"/>
    <property type="molecule type" value="mRNA"/>
</dbReference>
<dbReference type="EMBL" id="AK148691">
    <property type="protein sequence ID" value="BAE28644.1"/>
    <property type="status" value="ALT_INIT"/>
    <property type="molecule type" value="mRNA"/>
</dbReference>
<dbReference type="CCDS" id="CCDS50947.1"/>
<dbReference type="RefSeq" id="NP_001028296.1">
    <property type="nucleotide sequence ID" value="NM_001033124.1"/>
</dbReference>
<dbReference type="SMR" id="Q3UFB7"/>
<dbReference type="BioGRID" id="201868">
    <property type="interactions" value="25"/>
</dbReference>
<dbReference type="DIP" id="DIP-60900N"/>
<dbReference type="FunCoup" id="Q3UFB7">
    <property type="interactions" value="1319"/>
</dbReference>
<dbReference type="IntAct" id="Q3UFB7">
    <property type="interactions" value="6"/>
</dbReference>
<dbReference type="STRING" id="10090.ENSMUSP00000029712"/>
<dbReference type="ChEMBL" id="CHEMBL5465547"/>
<dbReference type="GlyCosmos" id="Q3UFB7">
    <property type="glycosylation" value="11 sites, No reported glycans"/>
</dbReference>
<dbReference type="GlyGen" id="Q3UFB7">
    <property type="glycosylation" value="11 sites, 2 N-linked glycans (2 sites)"/>
</dbReference>
<dbReference type="iPTMnet" id="Q3UFB7"/>
<dbReference type="PhosphoSitePlus" id="Q3UFB7"/>
<dbReference type="PaxDb" id="10090-ENSMUSP00000029712"/>
<dbReference type="PeptideAtlas" id="Q3UFB7"/>
<dbReference type="Antibodypedia" id="3896">
    <property type="antibodies" value="1652 antibodies from 47 providers"/>
</dbReference>
<dbReference type="DNASU" id="18211"/>
<dbReference type="Ensembl" id="ENSMUST00000029712.5">
    <property type="protein sequence ID" value="ENSMUSP00000029712.5"/>
    <property type="gene ID" value="ENSMUSG00000028072.7"/>
</dbReference>
<dbReference type="GeneID" id="18211"/>
<dbReference type="KEGG" id="mmu:18211"/>
<dbReference type="UCSC" id="uc008psw.1">
    <property type="organism name" value="mouse"/>
</dbReference>
<dbReference type="AGR" id="MGI:97383"/>
<dbReference type="CTD" id="4914"/>
<dbReference type="MGI" id="MGI:97383">
    <property type="gene designation" value="Ntrk1"/>
</dbReference>
<dbReference type="VEuPathDB" id="HostDB:ENSMUSG00000028072"/>
<dbReference type="eggNOG" id="KOG1026">
    <property type="taxonomic scope" value="Eukaryota"/>
</dbReference>
<dbReference type="GeneTree" id="ENSGT00940000159412"/>
<dbReference type="HOGENOM" id="CLU_000288_74_1_1"/>
<dbReference type="InParanoid" id="Q3UFB7"/>
<dbReference type="OMA" id="LTCHISA"/>
<dbReference type="OrthoDB" id="10005095at2759"/>
<dbReference type="PhylomeDB" id="Q3UFB7"/>
<dbReference type="TreeFam" id="TF106465"/>
<dbReference type="Reactome" id="R-MMU-170968">
    <property type="pathway name" value="Frs2-mediated activation"/>
</dbReference>
<dbReference type="Reactome" id="R-MMU-170984">
    <property type="pathway name" value="ARMS-mediated activation"/>
</dbReference>
<dbReference type="Reactome" id="R-MMU-177504">
    <property type="pathway name" value="Retrograde neurotrophin signalling"/>
</dbReference>
<dbReference type="Reactome" id="R-MMU-187042">
    <property type="pathway name" value="TRKA activation by NGF"/>
</dbReference>
<dbReference type="Reactome" id="R-MMU-198203">
    <property type="pathway name" value="PI3K/AKT activation"/>
</dbReference>
<dbReference type="BioGRID-ORCS" id="18211">
    <property type="hits" value="3 hits in 81 CRISPR screens"/>
</dbReference>
<dbReference type="PRO" id="PR:Q3UFB7"/>
<dbReference type="Proteomes" id="UP000000589">
    <property type="component" value="Chromosome 3"/>
</dbReference>
<dbReference type="RNAct" id="Q3UFB7">
    <property type="molecule type" value="protein"/>
</dbReference>
<dbReference type="Bgee" id="ENSMUSG00000028072">
    <property type="expression patterns" value="Expressed in lumbar dorsal root ganglion and 82 other cell types or tissues"/>
</dbReference>
<dbReference type="GO" id="GO:0030424">
    <property type="term" value="C:axon"/>
    <property type="evidence" value="ECO:0000314"/>
    <property type="project" value="MGI"/>
</dbReference>
<dbReference type="GO" id="GO:0009986">
    <property type="term" value="C:cell surface"/>
    <property type="evidence" value="ECO:0000314"/>
    <property type="project" value="MGI"/>
</dbReference>
<dbReference type="GO" id="GO:0005737">
    <property type="term" value="C:cytoplasm"/>
    <property type="evidence" value="ECO:0000314"/>
    <property type="project" value="MGI"/>
</dbReference>
<dbReference type="GO" id="GO:0030425">
    <property type="term" value="C:dendrite"/>
    <property type="evidence" value="ECO:0007669"/>
    <property type="project" value="Ensembl"/>
</dbReference>
<dbReference type="GO" id="GO:0005769">
    <property type="term" value="C:early endosome"/>
    <property type="evidence" value="ECO:0000314"/>
    <property type="project" value="MGI"/>
</dbReference>
<dbReference type="GO" id="GO:0031901">
    <property type="term" value="C:early endosome membrane"/>
    <property type="evidence" value="ECO:0007669"/>
    <property type="project" value="UniProtKB-SubCell"/>
</dbReference>
<dbReference type="GO" id="GO:0005770">
    <property type="term" value="C:late endosome"/>
    <property type="evidence" value="ECO:0000314"/>
    <property type="project" value="MGI"/>
</dbReference>
<dbReference type="GO" id="GO:0031902">
    <property type="term" value="C:late endosome membrane"/>
    <property type="evidence" value="ECO:0007669"/>
    <property type="project" value="UniProtKB-SubCell"/>
</dbReference>
<dbReference type="GO" id="GO:0005739">
    <property type="term" value="C:mitochondrion"/>
    <property type="evidence" value="ECO:0007669"/>
    <property type="project" value="Ensembl"/>
</dbReference>
<dbReference type="GO" id="GO:0043025">
    <property type="term" value="C:neuronal cell body"/>
    <property type="evidence" value="ECO:0007669"/>
    <property type="project" value="Ensembl"/>
</dbReference>
<dbReference type="GO" id="GO:0005886">
    <property type="term" value="C:plasma membrane"/>
    <property type="evidence" value="ECO:0000250"/>
    <property type="project" value="UniProtKB"/>
</dbReference>
<dbReference type="GO" id="GO:0032991">
    <property type="term" value="C:protein-containing complex"/>
    <property type="evidence" value="ECO:0000314"/>
    <property type="project" value="MGI"/>
</dbReference>
<dbReference type="GO" id="GO:0043235">
    <property type="term" value="C:receptor complex"/>
    <property type="evidence" value="ECO:0000266"/>
    <property type="project" value="MGI"/>
</dbReference>
<dbReference type="GO" id="GO:0055038">
    <property type="term" value="C:recycling endosome membrane"/>
    <property type="evidence" value="ECO:0007669"/>
    <property type="project" value="UniProtKB-SubCell"/>
</dbReference>
<dbReference type="GO" id="GO:0005524">
    <property type="term" value="F:ATP binding"/>
    <property type="evidence" value="ECO:0007669"/>
    <property type="project" value="UniProtKB-KW"/>
</dbReference>
<dbReference type="GO" id="GO:0005004">
    <property type="term" value="F:GPI-linked ephrin receptor activity"/>
    <property type="evidence" value="ECO:0007669"/>
    <property type="project" value="Ensembl"/>
</dbReference>
<dbReference type="GO" id="GO:0019900">
    <property type="term" value="F:kinase binding"/>
    <property type="evidence" value="ECO:0007669"/>
    <property type="project" value="Ensembl"/>
</dbReference>
<dbReference type="GO" id="GO:0048406">
    <property type="term" value="F:nerve growth factor binding"/>
    <property type="evidence" value="ECO:0000250"/>
    <property type="project" value="UniProtKB"/>
</dbReference>
<dbReference type="GO" id="GO:0010465">
    <property type="term" value="F:nerve growth factor receptor activity"/>
    <property type="evidence" value="ECO:0000250"/>
    <property type="project" value="UniProtKB"/>
</dbReference>
<dbReference type="GO" id="GO:0005166">
    <property type="term" value="F:neurotrophin p75 receptor binding"/>
    <property type="evidence" value="ECO:0007669"/>
    <property type="project" value="Ensembl"/>
</dbReference>
<dbReference type="GO" id="GO:0042803">
    <property type="term" value="F:protein homodimerization activity"/>
    <property type="evidence" value="ECO:0000250"/>
    <property type="project" value="UniProtKB"/>
</dbReference>
<dbReference type="GO" id="GO:0004713">
    <property type="term" value="F:protein tyrosine kinase activity"/>
    <property type="evidence" value="ECO:0000266"/>
    <property type="project" value="MGI"/>
</dbReference>
<dbReference type="GO" id="GO:0004714">
    <property type="term" value="F:transmembrane receptor protein tyrosine kinase activity"/>
    <property type="evidence" value="ECO:0000250"/>
    <property type="project" value="UniProtKB"/>
</dbReference>
<dbReference type="GO" id="GO:0007411">
    <property type="term" value="P:axon guidance"/>
    <property type="evidence" value="ECO:0007669"/>
    <property type="project" value="Ensembl"/>
</dbReference>
<dbReference type="GO" id="GO:0060385">
    <property type="term" value="P:axonogenesis involved in innervation"/>
    <property type="evidence" value="ECO:0000315"/>
    <property type="project" value="UniProtKB"/>
</dbReference>
<dbReference type="GO" id="GO:0030183">
    <property type="term" value="P:B cell differentiation"/>
    <property type="evidence" value="ECO:0000315"/>
    <property type="project" value="MGI"/>
</dbReference>
<dbReference type="GO" id="GO:0061368">
    <property type="term" value="P:behavioral response to formalin induced pain"/>
    <property type="evidence" value="ECO:0000315"/>
    <property type="project" value="MGI"/>
</dbReference>
<dbReference type="GO" id="GO:0071363">
    <property type="term" value="P:cellular response to growth factor stimulus"/>
    <property type="evidence" value="ECO:0000266"/>
    <property type="project" value="MGI"/>
</dbReference>
<dbReference type="GO" id="GO:1990090">
    <property type="term" value="P:cellular response to nerve growth factor stimulus"/>
    <property type="evidence" value="ECO:0000314"/>
    <property type="project" value="MGI"/>
</dbReference>
<dbReference type="GO" id="GO:0071316">
    <property type="term" value="P:cellular response to nicotine"/>
    <property type="evidence" value="ECO:0007669"/>
    <property type="project" value="Ensembl"/>
</dbReference>
<dbReference type="GO" id="GO:0007623">
    <property type="term" value="P:circadian rhythm"/>
    <property type="evidence" value="ECO:0000270"/>
    <property type="project" value="UniProtKB"/>
</dbReference>
<dbReference type="GO" id="GO:0050966">
    <property type="term" value="P:detection of mechanical stimulus involved in sensory perception of pain"/>
    <property type="evidence" value="ECO:0007669"/>
    <property type="project" value="Ensembl"/>
</dbReference>
<dbReference type="GO" id="GO:0050965">
    <property type="term" value="P:detection of temperature stimulus involved in sensory perception of pain"/>
    <property type="evidence" value="ECO:0007669"/>
    <property type="project" value="Ensembl"/>
</dbReference>
<dbReference type="GO" id="GO:0060384">
    <property type="term" value="P:innervation"/>
    <property type="evidence" value="ECO:0000315"/>
    <property type="project" value="MGI"/>
</dbReference>
<dbReference type="GO" id="GO:0007611">
    <property type="term" value="P:learning or memory"/>
    <property type="evidence" value="ECO:0007669"/>
    <property type="project" value="Ensembl"/>
</dbReference>
<dbReference type="GO" id="GO:0042490">
    <property type="term" value="P:mechanoreceptor differentiation"/>
    <property type="evidence" value="ECO:0000315"/>
    <property type="project" value="MGI"/>
</dbReference>
<dbReference type="GO" id="GO:0008285">
    <property type="term" value="P:negative regulation of cell population proliferation"/>
    <property type="evidence" value="ECO:0000250"/>
    <property type="project" value="UniProtKB"/>
</dbReference>
<dbReference type="GO" id="GO:0043524">
    <property type="term" value="P:negative regulation of neuron apoptotic process"/>
    <property type="evidence" value="ECO:0000315"/>
    <property type="project" value="UniProtKB"/>
</dbReference>
<dbReference type="GO" id="GO:0038180">
    <property type="term" value="P:nerve growth factor signaling pathway"/>
    <property type="evidence" value="ECO:0000314"/>
    <property type="project" value="MGI"/>
</dbReference>
<dbReference type="GO" id="GO:0007399">
    <property type="term" value="P:nervous system development"/>
    <property type="evidence" value="ECO:0000314"/>
    <property type="project" value="MGI"/>
</dbReference>
<dbReference type="GO" id="GO:0051402">
    <property type="term" value="P:neuron apoptotic process"/>
    <property type="evidence" value="ECO:0000316"/>
    <property type="project" value="MGI"/>
</dbReference>
<dbReference type="GO" id="GO:0048666">
    <property type="term" value="P:neuron development"/>
    <property type="evidence" value="ECO:0000266"/>
    <property type="project" value="MGI"/>
</dbReference>
<dbReference type="GO" id="GO:0031175">
    <property type="term" value="P:neuron projection development"/>
    <property type="evidence" value="ECO:0000266"/>
    <property type="project" value="MGI"/>
</dbReference>
<dbReference type="GO" id="GO:0048011">
    <property type="term" value="P:neurotrophin TRK receptor signaling pathway"/>
    <property type="evidence" value="ECO:0000250"/>
    <property type="project" value="UniProtKB"/>
</dbReference>
<dbReference type="GO" id="GO:0021553">
    <property type="term" value="P:olfactory nerve development"/>
    <property type="evidence" value="ECO:0007669"/>
    <property type="project" value="Ensembl"/>
</dbReference>
<dbReference type="GO" id="GO:0038083">
    <property type="term" value="P:peptidyl-tyrosine autophosphorylation"/>
    <property type="evidence" value="ECO:0000250"/>
    <property type="project" value="UniProtKB"/>
</dbReference>
<dbReference type="GO" id="GO:0018108">
    <property type="term" value="P:peptidyl-tyrosine phosphorylation"/>
    <property type="evidence" value="ECO:0000250"/>
    <property type="project" value="UniProtKB"/>
</dbReference>
<dbReference type="GO" id="GO:0070374">
    <property type="term" value="P:positive regulation of ERK1 and ERK2 cascade"/>
    <property type="evidence" value="ECO:0000250"/>
    <property type="project" value="UniProtKB"/>
</dbReference>
<dbReference type="GO" id="GO:0043547">
    <property type="term" value="P:positive regulation of GTPase activity"/>
    <property type="evidence" value="ECO:0000250"/>
    <property type="project" value="UniProtKB"/>
</dbReference>
<dbReference type="GO" id="GO:0010976">
    <property type="term" value="P:positive regulation of neuron projection development"/>
    <property type="evidence" value="ECO:0000250"/>
    <property type="project" value="UniProtKB"/>
</dbReference>
<dbReference type="GO" id="GO:0051092">
    <property type="term" value="P:positive regulation of NF-kappaB transcription factor activity"/>
    <property type="evidence" value="ECO:0000250"/>
    <property type="project" value="UniProtKB"/>
</dbReference>
<dbReference type="GO" id="GO:0051897">
    <property type="term" value="P:positive regulation of phosphatidylinositol 3-kinase/protein kinase B signal transduction"/>
    <property type="evidence" value="ECO:0007669"/>
    <property type="project" value="Ensembl"/>
</dbReference>
<dbReference type="GO" id="GO:0043068">
    <property type="term" value="P:positive regulation of programmed cell death"/>
    <property type="evidence" value="ECO:0000250"/>
    <property type="project" value="UniProtKB"/>
</dbReference>
<dbReference type="GO" id="GO:0046579">
    <property type="term" value="P:positive regulation of Ras protein signal transduction"/>
    <property type="evidence" value="ECO:0000250"/>
    <property type="project" value="UniProtKB"/>
</dbReference>
<dbReference type="GO" id="GO:0051965">
    <property type="term" value="P:positive regulation of synapse assembly"/>
    <property type="evidence" value="ECO:0000314"/>
    <property type="project" value="MGI"/>
</dbReference>
<dbReference type="GO" id="GO:0051968">
    <property type="term" value="P:positive regulation of synaptic transmission, glutamatergic"/>
    <property type="evidence" value="ECO:0007669"/>
    <property type="project" value="Ensembl"/>
</dbReference>
<dbReference type="GO" id="GO:0010623">
    <property type="term" value="P:programmed cell death involved in cell development"/>
    <property type="evidence" value="ECO:0000250"/>
    <property type="project" value="UniProtKB"/>
</dbReference>
<dbReference type="GO" id="GO:0046777">
    <property type="term" value="P:protein autophosphorylation"/>
    <property type="evidence" value="ECO:0000250"/>
    <property type="project" value="UniProtKB"/>
</dbReference>
<dbReference type="GO" id="GO:0048678">
    <property type="term" value="P:response to axon injury"/>
    <property type="evidence" value="ECO:0007669"/>
    <property type="project" value="Ensembl"/>
</dbReference>
<dbReference type="GO" id="GO:0051602">
    <property type="term" value="P:response to electrical stimulus"/>
    <property type="evidence" value="ECO:0007669"/>
    <property type="project" value="Ensembl"/>
</dbReference>
<dbReference type="GO" id="GO:0051599">
    <property type="term" value="P:response to hydrostatic pressure"/>
    <property type="evidence" value="ECO:0007669"/>
    <property type="project" value="Ensembl"/>
</dbReference>
<dbReference type="GO" id="GO:0031667">
    <property type="term" value="P:response to nutrient levels"/>
    <property type="evidence" value="ECO:0007669"/>
    <property type="project" value="Ensembl"/>
</dbReference>
<dbReference type="GO" id="GO:0009410">
    <property type="term" value="P:response to xenobiotic stimulus"/>
    <property type="evidence" value="ECO:0007669"/>
    <property type="project" value="Ensembl"/>
</dbReference>
<dbReference type="GO" id="GO:0060009">
    <property type="term" value="P:Sertoli cell development"/>
    <property type="evidence" value="ECO:0007669"/>
    <property type="project" value="Ensembl"/>
</dbReference>
<dbReference type="GO" id="GO:0007283">
    <property type="term" value="P:spermatogenesis"/>
    <property type="evidence" value="ECO:0007669"/>
    <property type="project" value="Ensembl"/>
</dbReference>
<dbReference type="GO" id="GO:0048485">
    <property type="term" value="P:sympathetic nervous system development"/>
    <property type="evidence" value="ECO:0000315"/>
    <property type="project" value="UniProtKB"/>
</dbReference>
<dbReference type="CDD" id="cd04971">
    <property type="entry name" value="IgI_TrKABC_d5"/>
    <property type="match status" value="1"/>
</dbReference>
<dbReference type="FunFam" id="1.10.510.10:FF:000034">
    <property type="entry name" value="Tyrosine-protein kinase receptor"/>
    <property type="match status" value="1"/>
</dbReference>
<dbReference type="FunFam" id="2.60.40.10:FF:000522">
    <property type="entry name" value="Tyrosine-protein kinase receptor"/>
    <property type="match status" value="1"/>
</dbReference>
<dbReference type="FunFam" id="2.60.40.10:FF:000664">
    <property type="entry name" value="Tyrosine-protein kinase receptor"/>
    <property type="match status" value="1"/>
</dbReference>
<dbReference type="FunFam" id="3.30.200.20:FF:000033">
    <property type="entry name" value="Tyrosine-protein kinase receptor"/>
    <property type="match status" value="1"/>
</dbReference>
<dbReference type="FunFam" id="3.80.10.10:FF:000163">
    <property type="entry name" value="Tyrosine-protein kinase receptor"/>
    <property type="match status" value="1"/>
</dbReference>
<dbReference type="Gene3D" id="2.60.40.10">
    <property type="entry name" value="Immunoglobulins"/>
    <property type="match status" value="2"/>
</dbReference>
<dbReference type="Gene3D" id="3.30.200.20">
    <property type="entry name" value="Phosphorylase Kinase, domain 1"/>
    <property type="match status" value="1"/>
</dbReference>
<dbReference type="Gene3D" id="3.80.10.10">
    <property type="entry name" value="Ribonuclease Inhibitor"/>
    <property type="match status" value="1"/>
</dbReference>
<dbReference type="Gene3D" id="1.10.510.10">
    <property type="entry name" value="Transferase(Phosphotransferase) domain 1"/>
    <property type="match status" value="1"/>
</dbReference>
<dbReference type="InterPro" id="IPR007110">
    <property type="entry name" value="Ig-like_dom"/>
</dbReference>
<dbReference type="InterPro" id="IPR036179">
    <property type="entry name" value="Ig-like_dom_sf"/>
</dbReference>
<dbReference type="InterPro" id="IPR013783">
    <property type="entry name" value="Ig-like_fold"/>
</dbReference>
<dbReference type="InterPro" id="IPR011009">
    <property type="entry name" value="Kinase-like_dom_sf"/>
</dbReference>
<dbReference type="InterPro" id="IPR001611">
    <property type="entry name" value="Leu-rich_rpt"/>
</dbReference>
<dbReference type="InterPro" id="IPR032675">
    <property type="entry name" value="LRR_dom_sf"/>
</dbReference>
<dbReference type="InterPro" id="IPR020777">
    <property type="entry name" value="NTRK"/>
</dbReference>
<dbReference type="InterPro" id="IPR020461">
    <property type="entry name" value="NTRK1"/>
</dbReference>
<dbReference type="InterPro" id="IPR031635">
    <property type="entry name" value="NTRK_LRRCT"/>
</dbReference>
<dbReference type="InterPro" id="IPR000719">
    <property type="entry name" value="Prot_kinase_dom"/>
</dbReference>
<dbReference type="InterPro" id="IPR017441">
    <property type="entry name" value="Protein_kinase_ATP_BS"/>
</dbReference>
<dbReference type="InterPro" id="IPR050122">
    <property type="entry name" value="RTK"/>
</dbReference>
<dbReference type="InterPro" id="IPR001245">
    <property type="entry name" value="Ser-Thr/Tyr_kinase_cat_dom"/>
</dbReference>
<dbReference type="InterPro" id="IPR008266">
    <property type="entry name" value="Tyr_kinase_AS"/>
</dbReference>
<dbReference type="InterPro" id="IPR020635">
    <property type="entry name" value="Tyr_kinase_cat_dom"/>
</dbReference>
<dbReference type="InterPro" id="IPR002011">
    <property type="entry name" value="Tyr_kinase_rcpt_2_CS"/>
</dbReference>
<dbReference type="PANTHER" id="PTHR24416:SF370">
    <property type="entry name" value="HIGH AFFINITY NERVE GROWTH FACTOR RECEPTOR"/>
    <property type="match status" value="1"/>
</dbReference>
<dbReference type="PANTHER" id="PTHR24416">
    <property type="entry name" value="TYROSINE-PROTEIN KINASE RECEPTOR"/>
    <property type="match status" value="1"/>
</dbReference>
<dbReference type="Pfam" id="PF13855">
    <property type="entry name" value="LRR_8"/>
    <property type="match status" value="1"/>
</dbReference>
<dbReference type="Pfam" id="PF16920">
    <property type="entry name" value="LRRCT_2"/>
    <property type="match status" value="1"/>
</dbReference>
<dbReference type="Pfam" id="PF07714">
    <property type="entry name" value="PK_Tyr_Ser-Thr"/>
    <property type="match status" value="1"/>
</dbReference>
<dbReference type="PRINTS" id="PR01939">
    <property type="entry name" value="NTKRECEPTOR"/>
</dbReference>
<dbReference type="PRINTS" id="PR01940">
    <property type="entry name" value="NTKRECEPTOR1"/>
</dbReference>
<dbReference type="PRINTS" id="PR00109">
    <property type="entry name" value="TYRKINASE"/>
</dbReference>
<dbReference type="SMART" id="SM00219">
    <property type="entry name" value="TyrKc"/>
    <property type="match status" value="1"/>
</dbReference>
<dbReference type="SUPFAM" id="SSF48726">
    <property type="entry name" value="Immunoglobulin"/>
    <property type="match status" value="2"/>
</dbReference>
<dbReference type="SUPFAM" id="SSF52058">
    <property type="entry name" value="L domain-like"/>
    <property type="match status" value="1"/>
</dbReference>
<dbReference type="SUPFAM" id="SSF56112">
    <property type="entry name" value="Protein kinase-like (PK-like)"/>
    <property type="match status" value="1"/>
</dbReference>
<dbReference type="PROSITE" id="PS50835">
    <property type="entry name" value="IG_LIKE"/>
    <property type="match status" value="1"/>
</dbReference>
<dbReference type="PROSITE" id="PS00107">
    <property type="entry name" value="PROTEIN_KINASE_ATP"/>
    <property type="match status" value="1"/>
</dbReference>
<dbReference type="PROSITE" id="PS50011">
    <property type="entry name" value="PROTEIN_KINASE_DOM"/>
    <property type="match status" value="1"/>
</dbReference>
<dbReference type="PROSITE" id="PS00109">
    <property type="entry name" value="PROTEIN_KINASE_TYR"/>
    <property type="match status" value="1"/>
</dbReference>
<dbReference type="PROSITE" id="PS00239">
    <property type="entry name" value="RECEPTOR_TYR_KIN_II"/>
    <property type="match status" value="1"/>
</dbReference>
<gene>
    <name type="primary">Ntrk1</name>
</gene>
<evidence type="ECO:0000250" key="1"/>
<evidence type="ECO:0000250" key="2">
    <source>
        <dbReference type="UniProtKB" id="P04629"/>
    </source>
</evidence>
<evidence type="ECO:0000250" key="3">
    <source>
        <dbReference type="UniProtKB" id="P35739"/>
    </source>
</evidence>
<evidence type="ECO:0000255" key="4"/>
<evidence type="ECO:0000255" key="5">
    <source>
        <dbReference type="PROSITE-ProRule" id="PRU00114"/>
    </source>
</evidence>
<evidence type="ECO:0000255" key="6">
    <source>
        <dbReference type="PROSITE-ProRule" id="PRU00159"/>
    </source>
</evidence>
<evidence type="ECO:0000255" key="7">
    <source>
        <dbReference type="PROSITE-ProRule" id="PRU10028"/>
    </source>
</evidence>
<evidence type="ECO:0000269" key="8">
    <source>
    </source>
</evidence>
<evidence type="ECO:0000269" key="9">
    <source>
    </source>
</evidence>
<evidence type="ECO:0000269" key="10">
    <source>
    </source>
</evidence>
<evidence type="ECO:0000269" key="11">
    <source>
    </source>
</evidence>
<evidence type="ECO:0000269" key="12">
    <source>
    </source>
</evidence>
<evidence type="ECO:0000269" key="13">
    <source>
    </source>
</evidence>
<evidence type="ECO:0000305" key="14"/>
<name>NTRK1_MOUSE</name>